<comment type="function">
    <text evidence="1">Involved in the uptake of glucose.</text>
</comment>
<comment type="subcellular location">
    <subcellularLocation>
        <location evidence="3">Cell membrane</location>
        <topology evidence="3">Multi-pass membrane protein</topology>
    </subcellularLocation>
</comment>
<comment type="similarity">
    <text evidence="3">Belongs to the GRP transporter (TC 2.A.7.5) family.</text>
</comment>
<proteinExistence type="inferred from homology"/>
<dbReference type="EMBL" id="BX571856">
    <property type="protein sequence ID" value="CAG41322.1"/>
    <property type="molecule type" value="Genomic_DNA"/>
</dbReference>
<dbReference type="RefSeq" id="WP_001159900.1">
    <property type="nucleotide sequence ID" value="NC_002952.2"/>
</dbReference>
<dbReference type="SMR" id="Q6GEH7"/>
<dbReference type="KEGG" id="sar:SAR2341"/>
<dbReference type="HOGENOM" id="CLU_076024_0_0_9"/>
<dbReference type="Proteomes" id="UP000000596">
    <property type="component" value="Chromosome"/>
</dbReference>
<dbReference type="GO" id="GO:0005886">
    <property type="term" value="C:plasma membrane"/>
    <property type="evidence" value="ECO:0007669"/>
    <property type="project" value="UniProtKB-SubCell"/>
</dbReference>
<dbReference type="GO" id="GO:0015144">
    <property type="term" value="F:carbohydrate transmembrane transporter activity"/>
    <property type="evidence" value="ECO:0007669"/>
    <property type="project" value="InterPro"/>
</dbReference>
<dbReference type="InterPro" id="IPR010651">
    <property type="entry name" value="Sugar_transport"/>
</dbReference>
<dbReference type="PANTHER" id="PTHR16119">
    <property type="entry name" value="TRANSMEMBRANE PROTEIN 144"/>
    <property type="match status" value="1"/>
</dbReference>
<dbReference type="PANTHER" id="PTHR16119:SF17">
    <property type="entry name" value="TRANSMEMBRANE PROTEIN 144"/>
    <property type="match status" value="1"/>
</dbReference>
<dbReference type="Pfam" id="PF06800">
    <property type="entry name" value="Sugar_transport"/>
    <property type="match status" value="1"/>
</dbReference>
<dbReference type="SUPFAM" id="SSF103481">
    <property type="entry name" value="Multidrug resistance efflux transporter EmrE"/>
    <property type="match status" value="2"/>
</dbReference>
<evidence type="ECO:0000250" key="1"/>
<evidence type="ECO:0000255" key="2"/>
<evidence type="ECO:0000305" key="3"/>
<sequence>MQFLDFLIALLPALFWGSVVLINVFVGGGPYNQIRGTTLGALIVGLGLLITGFAKFNNPTVIIVGLISGALWAFGQANQLKSISLIGVSNTMPVSTGMQLVGTTLFSVIFLGEWSSMTQIIFGLIAMILLVTGVALTSLKAKNERQSDNPEFKKAMGILIVSTVGYVGFVVLGDIFGVGGTDALFFQSVGMAIGGFILSMNHKTSLKSTALNLLPGVIWGIGNLFMFYSQPKVGVATSFSLSQLLVIVSTLGGIFILGERKDRRQMTGIWVGIIIIVIAAIILGNLK</sequence>
<keyword id="KW-1003">Cell membrane</keyword>
<keyword id="KW-0472">Membrane</keyword>
<keyword id="KW-0762">Sugar transport</keyword>
<keyword id="KW-0812">Transmembrane</keyword>
<keyword id="KW-1133">Transmembrane helix</keyword>
<keyword id="KW-0813">Transport</keyword>
<organism>
    <name type="scientific">Staphylococcus aureus (strain MRSA252)</name>
    <dbReference type="NCBI Taxonomy" id="282458"/>
    <lineage>
        <taxon>Bacteria</taxon>
        <taxon>Bacillati</taxon>
        <taxon>Bacillota</taxon>
        <taxon>Bacilli</taxon>
        <taxon>Bacillales</taxon>
        <taxon>Staphylococcaceae</taxon>
        <taxon>Staphylococcus</taxon>
    </lineage>
</organism>
<reference key="1">
    <citation type="journal article" date="2004" name="Proc. Natl. Acad. Sci. U.S.A.">
        <title>Complete genomes of two clinical Staphylococcus aureus strains: evidence for the rapid evolution of virulence and drug resistance.</title>
        <authorList>
            <person name="Holden M.T.G."/>
            <person name="Feil E.J."/>
            <person name="Lindsay J.A."/>
            <person name="Peacock S.J."/>
            <person name="Day N.P.J."/>
            <person name="Enright M.C."/>
            <person name="Foster T.J."/>
            <person name="Moore C.E."/>
            <person name="Hurst L."/>
            <person name="Atkin R."/>
            <person name="Barron A."/>
            <person name="Bason N."/>
            <person name="Bentley S.D."/>
            <person name="Chillingworth C."/>
            <person name="Chillingworth T."/>
            <person name="Churcher C."/>
            <person name="Clark L."/>
            <person name="Corton C."/>
            <person name="Cronin A."/>
            <person name="Doggett J."/>
            <person name="Dowd L."/>
            <person name="Feltwell T."/>
            <person name="Hance Z."/>
            <person name="Harris B."/>
            <person name="Hauser H."/>
            <person name="Holroyd S."/>
            <person name="Jagels K."/>
            <person name="James K.D."/>
            <person name="Lennard N."/>
            <person name="Line A."/>
            <person name="Mayes R."/>
            <person name="Moule S."/>
            <person name="Mungall K."/>
            <person name="Ormond D."/>
            <person name="Quail M.A."/>
            <person name="Rabbinowitsch E."/>
            <person name="Rutherford K.M."/>
            <person name="Sanders M."/>
            <person name="Sharp S."/>
            <person name="Simmonds M."/>
            <person name="Stevens K."/>
            <person name="Whitehead S."/>
            <person name="Barrell B.G."/>
            <person name="Spratt B.G."/>
            <person name="Parkhill J."/>
        </authorList>
    </citation>
    <scope>NUCLEOTIDE SEQUENCE [LARGE SCALE GENOMIC DNA]</scope>
    <source>
        <strain>MRSA252</strain>
    </source>
</reference>
<feature type="chain" id="PRO_0000213627" description="Probable glucose uptake protein GlcU">
    <location>
        <begin position="1"/>
        <end position="287"/>
    </location>
</feature>
<feature type="transmembrane region" description="Helical" evidence="2">
    <location>
        <begin position="7"/>
        <end position="29"/>
    </location>
</feature>
<feature type="transmembrane region" description="Helical" evidence="2">
    <location>
        <begin position="34"/>
        <end position="56"/>
    </location>
</feature>
<feature type="transmembrane region" description="Helical" evidence="2">
    <location>
        <begin position="58"/>
        <end position="75"/>
    </location>
</feature>
<feature type="transmembrane region" description="Helical" evidence="2">
    <location>
        <begin position="114"/>
        <end position="136"/>
    </location>
</feature>
<feature type="transmembrane region" description="Helical" evidence="2">
    <location>
        <begin position="156"/>
        <end position="178"/>
    </location>
</feature>
<feature type="transmembrane region" description="Helical" evidence="2">
    <location>
        <begin position="183"/>
        <end position="202"/>
    </location>
</feature>
<feature type="transmembrane region" description="Helical" evidence="2">
    <location>
        <begin position="209"/>
        <end position="228"/>
    </location>
</feature>
<feature type="transmembrane region" description="Helical" evidence="2">
    <location>
        <begin position="233"/>
        <end position="255"/>
    </location>
</feature>
<feature type="transmembrane region" description="Helical" evidence="2">
    <location>
        <begin position="267"/>
        <end position="286"/>
    </location>
</feature>
<gene>
    <name type="primary">glcU</name>
    <name type="ordered locus">SAR2341</name>
</gene>
<name>GLCU_STAAR</name>
<accession>Q6GEH7</accession>
<protein>
    <recommendedName>
        <fullName>Probable glucose uptake protein GlcU</fullName>
    </recommendedName>
</protein>